<accession>B6I695</accession>
<name>NORR_ECOSE</name>
<comment type="function">
    <text evidence="1">Required for the expression of anaerobic nitric oxide (NO) reductase, acts as a transcriptional activator for at least the norVW operon. Activation also requires sigma-54.</text>
</comment>
<comment type="pathway">
    <text evidence="1">Nitrogen metabolism; nitric oxide reduction.</text>
</comment>
<protein>
    <recommendedName>
        <fullName evidence="1">Anaerobic nitric oxide reductase transcription regulator NorR</fullName>
    </recommendedName>
</protein>
<feature type="chain" id="PRO_1000141192" description="Anaerobic nitric oxide reductase transcription regulator NorR">
    <location>
        <begin position="1"/>
        <end position="504"/>
    </location>
</feature>
<feature type="domain" description="Sigma-54 factor interaction" evidence="1">
    <location>
        <begin position="187"/>
        <end position="416"/>
    </location>
</feature>
<feature type="DNA-binding region" description="H-T-H motif" evidence="1">
    <location>
        <begin position="479"/>
        <end position="498"/>
    </location>
</feature>
<feature type="binding site" evidence="1">
    <location>
        <begin position="215"/>
        <end position="222"/>
    </location>
    <ligand>
        <name>ATP</name>
        <dbReference type="ChEBI" id="CHEBI:30616"/>
    </ligand>
</feature>
<feature type="binding site" evidence="1">
    <location>
        <begin position="278"/>
        <end position="287"/>
    </location>
    <ligand>
        <name>ATP</name>
        <dbReference type="ChEBI" id="CHEBI:30616"/>
    </ligand>
</feature>
<feature type="modified residue" description="4-aspartylphosphate" evidence="1">
    <location>
        <position position="57"/>
    </location>
</feature>
<sequence>MSFSVDVLANIAIELQRGIGHQDRFQRLITTLRQVLECDASALLRYDSRQFIPLAIDGLAKDVLGRRFALEGHPRLEAIARAGDVVRFPADSELPDPYDGLIPGQESLKVHACVGLPLFAGQNLIGALTLDGMQPDQFDVFSDEELRLIAALAAGALSNALLIEQLESQNMLPGDAAPFEAVKQTQMIGLSPGMTQLKKEIEIVAASDLNVLISGETGTGKELVAKAIHEASPRAVNPLIYLNCAALPESVAESELFGHVKGAFTGAISNRSGKFEMADNGTLFLDEIGELSLALQAKLLRVLQYGDIQRVGDDRSLRVDVRVLAATNRDLREEVLAGRFRADLFHRLSVFPLSVPPLRERGDDVILLAGYFCEQCRLRLGLSRVVLSAGARNLLQHYSFPGNVRELEHAIHRAVVLSRATRSGDEVILEAQHFAFPEVTLPPPEAAAVPVVKQNLREATEAFQRETIRQALAQNHHNWAACARMLETDVANLHRLAKRLGLKD</sequence>
<keyword id="KW-0067">ATP-binding</keyword>
<keyword id="KW-0238">DNA-binding</keyword>
<keyword id="KW-0547">Nucleotide-binding</keyword>
<keyword id="KW-0597">Phosphoprotein</keyword>
<keyword id="KW-0804">Transcription</keyword>
<keyword id="KW-0805">Transcription regulation</keyword>
<proteinExistence type="inferred from homology"/>
<dbReference type="EMBL" id="AP009240">
    <property type="protein sequence ID" value="BAG78481.1"/>
    <property type="molecule type" value="Genomic_DNA"/>
</dbReference>
<dbReference type="RefSeq" id="WP_000010720.1">
    <property type="nucleotide sequence ID" value="NC_011415.1"/>
</dbReference>
<dbReference type="SMR" id="B6I695"/>
<dbReference type="KEGG" id="ecy:ECSE_2957"/>
<dbReference type="HOGENOM" id="CLU_000445_125_0_6"/>
<dbReference type="UniPathway" id="UPA00638"/>
<dbReference type="Proteomes" id="UP000008199">
    <property type="component" value="Chromosome"/>
</dbReference>
<dbReference type="GO" id="GO:0005524">
    <property type="term" value="F:ATP binding"/>
    <property type="evidence" value="ECO:0007669"/>
    <property type="project" value="UniProtKB-UniRule"/>
</dbReference>
<dbReference type="GO" id="GO:0016887">
    <property type="term" value="F:ATP hydrolysis activity"/>
    <property type="evidence" value="ECO:0007669"/>
    <property type="project" value="InterPro"/>
</dbReference>
<dbReference type="GO" id="GO:0003677">
    <property type="term" value="F:DNA binding"/>
    <property type="evidence" value="ECO:0007669"/>
    <property type="project" value="UniProtKB-KW"/>
</dbReference>
<dbReference type="GO" id="GO:0003700">
    <property type="term" value="F:DNA-binding transcription factor activity"/>
    <property type="evidence" value="ECO:0007669"/>
    <property type="project" value="UniProtKB-UniRule"/>
</dbReference>
<dbReference type="GO" id="GO:0000160">
    <property type="term" value="P:phosphorelay signal transduction system"/>
    <property type="evidence" value="ECO:0007669"/>
    <property type="project" value="UniProtKB-UniRule"/>
</dbReference>
<dbReference type="CDD" id="cd00009">
    <property type="entry name" value="AAA"/>
    <property type="match status" value="1"/>
</dbReference>
<dbReference type="FunFam" id="1.10.10.60:FF:000188">
    <property type="entry name" value="Anaerobic nitric oxide reductase transcription regulator NorR"/>
    <property type="match status" value="1"/>
</dbReference>
<dbReference type="FunFam" id="1.10.8.60:FF:000045">
    <property type="entry name" value="Anaerobic nitric oxide reductase transcription regulator NorR"/>
    <property type="match status" value="1"/>
</dbReference>
<dbReference type="FunFam" id="3.30.450.40:FF:000021">
    <property type="entry name" value="Anaerobic nitric oxide reductase transcription regulator NorR"/>
    <property type="match status" value="1"/>
</dbReference>
<dbReference type="FunFam" id="3.40.50.300:FF:000006">
    <property type="entry name" value="DNA-binding transcriptional regulator NtrC"/>
    <property type="match status" value="1"/>
</dbReference>
<dbReference type="Gene3D" id="1.10.8.60">
    <property type="match status" value="1"/>
</dbReference>
<dbReference type="Gene3D" id="3.30.450.40">
    <property type="match status" value="1"/>
</dbReference>
<dbReference type="Gene3D" id="1.10.10.60">
    <property type="entry name" value="Homeodomain-like"/>
    <property type="match status" value="1"/>
</dbReference>
<dbReference type="Gene3D" id="3.40.50.300">
    <property type="entry name" value="P-loop containing nucleotide triphosphate hydrolases"/>
    <property type="match status" value="1"/>
</dbReference>
<dbReference type="HAMAP" id="MF_01314">
    <property type="entry name" value="NorR"/>
    <property type="match status" value="1"/>
</dbReference>
<dbReference type="InterPro" id="IPR003593">
    <property type="entry name" value="AAA+_ATPase"/>
</dbReference>
<dbReference type="InterPro" id="IPR003018">
    <property type="entry name" value="GAF"/>
</dbReference>
<dbReference type="InterPro" id="IPR029016">
    <property type="entry name" value="GAF-like_dom_sf"/>
</dbReference>
<dbReference type="InterPro" id="IPR009057">
    <property type="entry name" value="Homeodomain-like_sf"/>
</dbReference>
<dbReference type="InterPro" id="IPR023944">
    <property type="entry name" value="NorR"/>
</dbReference>
<dbReference type="InterPro" id="IPR027417">
    <property type="entry name" value="P-loop_NTPase"/>
</dbReference>
<dbReference type="InterPro" id="IPR002078">
    <property type="entry name" value="Sigma_54_int"/>
</dbReference>
<dbReference type="InterPro" id="IPR025662">
    <property type="entry name" value="Sigma_54_int_dom_ATP-bd_1"/>
</dbReference>
<dbReference type="InterPro" id="IPR025943">
    <property type="entry name" value="Sigma_54_int_dom_ATP-bd_2"/>
</dbReference>
<dbReference type="InterPro" id="IPR025944">
    <property type="entry name" value="Sigma_54_int_dom_CS"/>
</dbReference>
<dbReference type="NCBIfam" id="NF003451">
    <property type="entry name" value="PRK05022.1"/>
    <property type="match status" value="1"/>
</dbReference>
<dbReference type="PANTHER" id="PTHR32071:SF35">
    <property type="entry name" value="ANAEROBIC NITRIC OXIDE REDUCTASE TRANSCRIPTION REGULATOR NORR"/>
    <property type="match status" value="1"/>
</dbReference>
<dbReference type="PANTHER" id="PTHR32071">
    <property type="entry name" value="TRANSCRIPTIONAL REGULATORY PROTEIN"/>
    <property type="match status" value="1"/>
</dbReference>
<dbReference type="Pfam" id="PF01590">
    <property type="entry name" value="GAF"/>
    <property type="match status" value="1"/>
</dbReference>
<dbReference type="Pfam" id="PF00158">
    <property type="entry name" value="Sigma54_activat"/>
    <property type="match status" value="1"/>
</dbReference>
<dbReference type="SMART" id="SM00382">
    <property type="entry name" value="AAA"/>
    <property type="match status" value="1"/>
</dbReference>
<dbReference type="SMART" id="SM00065">
    <property type="entry name" value="GAF"/>
    <property type="match status" value="1"/>
</dbReference>
<dbReference type="SUPFAM" id="SSF55781">
    <property type="entry name" value="GAF domain-like"/>
    <property type="match status" value="1"/>
</dbReference>
<dbReference type="SUPFAM" id="SSF46689">
    <property type="entry name" value="Homeodomain-like"/>
    <property type="match status" value="1"/>
</dbReference>
<dbReference type="SUPFAM" id="SSF52540">
    <property type="entry name" value="P-loop containing nucleoside triphosphate hydrolases"/>
    <property type="match status" value="1"/>
</dbReference>
<dbReference type="PROSITE" id="PS00675">
    <property type="entry name" value="SIGMA54_INTERACT_1"/>
    <property type="match status" value="1"/>
</dbReference>
<dbReference type="PROSITE" id="PS00676">
    <property type="entry name" value="SIGMA54_INTERACT_2"/>
    <property type="match status" value="1"/>
</dbReference>
<dbReference type="PROSITE" id="PS00688">
    <property type="entry name" value="SIGMA54_INTERACT_3"/>
    <property type="match status" value="1"/>
</dbReference>
<dbReference type="PROSITE" id="PS50045">
    <property type="entry name" value="SIGMA54_INTERACT_4"/>
    <property type="match status" value="1"/>
</dbReference>
<organism>
    <name type="scientific">Escherichia coli (strain SE11)</name>
    <dbReference type="NCBI Taxonomy" id="409438"/>
    <lineage>
        <taxon>Bacteria</taxon>
        <taxon>Pseudomonadati</taxon>
        <taxon>Pseudomonadota</taxon>
        <taxon>Gammaproteobacteria</taxon>
        <taxon>Enterobacterales</taxon>
        <taxon>Enterobacteriaceae</taxon>
        <taxon>Escherichia</taxon>
    </lineage>
</organism>
<reference key="1">
    <citation type="journal article" date="2008" name="DNA Res.">
        <title>Complete genome sequence and comparative analysis of the wild-type commensal Escherichia coli strain SE11 isolated from a healthy adult.</title>
        <authorList>
            <person name="Oshima K."/>
            <person name="Toh H."/>
            <person name="Ogura Y."/>
            <person name="Sasamoto H."/>
            <person name="Morita H."/>
            <person name="Park S.-H."/>
            <person name="Ooka T."/>
            <person name="Iyoda S."/>
            <person name="Taylor T.D."/>
            <person name="Hayashi T."/>
            <person name="Itoh K."/>
            <person name="Hattori M."/>
        </authorList>
    </citation>
    <scope>NUCLEOTIDE SEQUENCE [LARGE SCALE GENOMIC DNA]</scope>
    <source>
        <strain>SE11</strain>
    </source>
</reference>
<evidence type="ECO:0000255" key="1">
    <source>
        <dbReference type="HAMAP-Rule" id="MF_01314"/>
    </source>
</evidence>
<gene>
    <name evidence="1" type="primary">norR</name>
    <name type="ordered locus">ECSE_2957</name>
</gene>